<name>CLPB_RHILO</name>
<dbReference type="EMBL" id="BA000012">
    <property type="protein sequence ID" value="BAB50320.1"/>
    <property type="molecule type" value="Genomic_DNA"/>
</dbReference>
<dbReference type="RefSeq" id="WP_010911666.1">
    <property type="nucleotide sequence ID" value="NC_002678.2"/>
</dbReference>
<dbReference type="SMR" id="Q98G96"/>
<dbReference type="KEGG" id="mlo:mll3429"/>
<dbReference type="PATRIC" id="fig|266835.9.peg.2730"/>
<dbReference type="eggNOG" id="COG0542">
    <property type="taxonomic scope" value="Bacteria"/>
</dbReference>
<dbReference type="HOGENOM" id="CLU_005070_4_1_5"/>
<dbReference type="Proteomes" id="UP000000552">
    <property type="component" value="Chromosome"/>
</dbReference>
<dbReference type="GO" id="GO:0005737">
    <property type="term" value="C:cytoplasm"/>
    <property type="evidence" value="ECO:0007669"/>
    <property type="project" value="UniProtKB-SubCell"/>
</dbReference>
<dbReference type="GO" id="GO:0005524">
    <property type="term" value="F:ATP binding"/>
    <property type="evidence" value="ECO:0007669"/>
    <property type="project" value="UniProtKB-KW"/>
</dbReference>
<dbReference type="GO" id="GO:0016887">
    <property type="term" value="F:ATP hydrolysis activity"/>
    <property type="evidence" value="ECO:0007669"/>
    <property type="project" value="InterPro"/>
</dbReference>
<dbReference type="GO" id="GO:0034605">
    <property type="term" value="P:cellular response to heat"/>
    <property type="evidence" value="ECO:0007669"/>
    <property type="project" value="TreeGrafter"/>
</dbReference>
<dbReference type="GO" id="GO:0042026">
    <property type="term" value="P:protein refolding"/>
    <property type="evidence" value="ECO:0007669"/>
    <property type="project" value="InterPro"/>
</dbReference>
<dbReference type="CDD" id="cd00009">
    <property type="entry name" value="AAA"/>
    <property type="match status" value="1"/>
</dbReference>
<dbReference type="CDD" id="cd19499">
    <property type="entry name" value="RecA-like_ClpB_Hsp104-like"/>
    <property type="match status" value="1"/>
</dbReference>
<dbReference type="FunFam" id="3.40.50.300:FF:000120">
    <property type="entry name" value="ATP-dependent chaperone ClpB"/>
    <property type="match status" value="1"/>
</dbReference>
<dbReference type="FunFam" id="3.40.50.300:FF:000025">
    <property type="entry name" value="ATP-dependent Clp protease subunit"/>
    <property type="match status" value="1"/>
</dbReference>
<dbReference type="FunFam" id="3.40.50.300:FF:000010">
    <property type="entry name" value="Chaperone clpB 1, putative"/>
    <property type="match status" value="1"/>
</dbReference>
<dbReference type="Gene3D" id="1.10.8.60">
    <property type="match status" value="1"/>
</dbReference>
<dbReference type="Gene3D" id="1.10.1780.10">
    <property type="entry name" value="Clp, N-terminal domain"/>
    <property type="match status" value="1"/>
</dbReference>
<dbReference type="Gene3D" id="3.40.50.300">
    <property type="entry name" value="P-loop containing nucleotide triphosphate hydrolases"/>
    <property type="match status" value="3"/>
</dbReference>
<dbReference type="InterPro" id="IPR003593">
    <property type="entry name" value="AAA+_ATPase"/>
</dbReference>
<dbReference type="InterPro" id="IPR003959">
    <property type="entry name" value="ATPase_AAA_core"/>
</dbReference>
<dbReference type="InterPro" id="IPR017730">
    <property type="entry name" value="Chaperonin_ClpB"/>
</dbReference>
<dbReference type="InterPro" id="IPR019489">
    <property type="entry name" value="Clp_ATPase_C"/>
</dbReference>
<dbReference type="InterPro" id="IPR036628">
    <property type="entry name" value="Clp_N_dom_sf"/>
</dbReference>
<dbReference type="InterPro" id="IPR004176">
    <property type="entry name" value="Clp_R_dom"/>
</dbReference>
<dbReference type="InterPro" id="IPR001270">
    <property type="entry name" value="ClpA/B"/>
</dbReference>
<dbReference type="InterPro" id="IPR018368">
    <property type="entry name" value="ClpA/B_CS1"/>
</dbReference>
<dbReference type="InterPro" id="IPR028299">
    <property type="entry name" value="ClpA/B_CS2"/>
</dbReference>
<dbReference type="InterPro" id="IPR041546">
    <property type="entry name" value="ClpA/ClpB_AAA_lid"/>
</dbReference>
<dbReference type="InterPro" id="IPR050130">
    <property type="entry name" value="ClpA_ClpB"/>
</dbReference>
<dbReference type="InterPro" id="IPR027417">
    <property type="entry name" value="P-loop_NTPase"/>
</dbReference>
<dbReference type="NCBIfam" id="TIGR03346">
    <property type="entry name" value="chaperone_ClpB"/>
    <property type="match status" value="1"/>
</dbReference>
<dbReference type="PANTHER" id="PTHR11638">
    <property type="entry name" value="ATP-DEPENDENT CLP PROTEASE"/>
    <property type="match status" value="1"/>
</dbReference>
<dbReference type="PANTHER" id="PTHR11638:SF18">
    <property type="entry name" value="HEAT SHOCK PROTEIN 104"/>
    <property type="match status" value="1"/>
</dbReference>
<dbReference type="Pfam" id="PF00004">
    <property type="entry name" value="AAA"/>
    <property type="match status" value="1"/>
</dbReference>
<dbReference type="Pfam" id="PF07724">
    <property type="entry name" value="AAA_2"/>
    <property type="match status" value="1"/>
</dbReference>
<dbReference type="Pfam" id="PF17871">
    <property type="entry name" value="AAA_lid_9"/>
    <property type="match status" value="1"/>
</dbReference>
<dbReference type="Pfam" id="PF02861">
    <property type="entry name" value="Clp_N"/>
    <property type="match status" value="2"/>
</dbReference>
<dbReference type="Pfam" id="PF10431">
    <property type="entry name" value="ClpB_D2-small"/>
    <property type="match status" value="1"/>
</dbReference>
<dbReference type="PRINTS" id="PR00300">
    <property type="entry name" value="CLPPROTEASEA"/>
</dbReference>
<dbReference type="SMART" id="SM00382">
    <property type="entry name" value="AAA"/>
    <property type="match status" value="2"/>
</dbReference>
<dbReference type="SMART" id="SM01086">
    <property type="entry name" value="ClpB_D2-small"/>
    <property type="match status" value="1"/>
</dbReference>
<dbReference type="SUPFAM" id="SSF81923">
    <property type="entry name" value="Double Clp-N motif"/>
    <property type="match status" value="1"/>
</dbReference>
<dbReference type="SUPFAM" id="SSF52540">
    <property type="entry name" value="P-loop containing nucleoside triphosphate hydrolases"/>
    <property type="match status" value="2"/>
</dbReference>
<dbReference type="PROSITE" id="PS51903">
    <property type="entry name" value="CLP_R"/>
    <property type="match status" value="1"/>
</dbReference>
<dbReference type="PROSITE" id="PS00870">
    <property type="entry name" value="CLPAB_1"/>
    <property type="match status" value="1"/>
</dbReference>
<dbReference type="PROSITE" id="PS00871">
    <property type="entry name" value="CLPAB_2"/>
    <property type="match status" value="1"/>
</dbReference>
<proteinExistence type="inferred from homology"/>
<organism>
    <name type="scientific">Mesorhizobium japonicum (strain LMG 29417 / CECT 9101 / MAFF 303099)</name>
    <name type="common">Mesorhizobium loti (strain MAFF 303099)</name>
    <dbReference type="NCBI Taxonomy" id="266835"/>
    <lineage>
        <taxon>Bacteria</taxon>
        <taxon>Pseudomonadati</taxon>
        <taxon>Pseudomonadota</taxon>
        <taxon>Alphaproteobacteria</taxon>
        <taxon>Hyphomicrobiales</taxon>
        <taxon>Phyllobacteriaceae</taxon>
        <taxon>Mesorhizobium</taxon>
    </lineage>
</organism>
<protein>
    <recommendedName>
        <fullName>Chaperone protein ClpB</fullName>
    </recommendedName>
</protein>
<keyword id="KW-0067">ATP-binding</keyword>
<keyword id="KW-0143">Chaperone</keyword>
<keyword id="KW-0175">Coiled coil</keyword>
<keyword id="KW-0963">Cytoplasm</keyword>
<keyword id="KW-0547">Nucleotide-binding</keyword>
<keyword id="KW-0677">Repeat</keyword>
<keyword id="KW-0346">Stress response</keyword>
<sequence length="868" mass="95979">MNLEKYSERVRGFIQSAQTMALSRNHQQFTPEHILKVLVDDDEGLAASLIERAGGNVRDVKLGVETALEAMPKVEGGNGQLYLAQPLAKVFSTAEELAKKAGDSFVTVERLLQALTMEKSAKTADILAKAGVTAQALNQVINDVRKGRTADSASAEQNYDALKKYARDLTADARAGKLDPVIGRDDEIRRTIQVLSRRTKNNPVLIGEPGVGKTAIAEGLALRIVNGDVPESLKDKQLMALDMGALIAGAKYRGEFEERLKAVLSEVTSANGNIILFIDEMHTLVGAGKADGAMDASNLLKPALARGELHCVGATTLDEYRKHVEKDPALARRFQPVFVDEPTVEDTVSILRGLKEKYEQHHKVRISDSALVAAATLSNRYIADRFLPDKAIDLVDEAASRLRMQVDSKPEALDEIDRRIMQLKIEREALKVETDDASKDRLVRLEKELVGLEEESTEITAKWQAEKQKLGLAADLKKQLDEARNELAIAQRKGEFQRAGELAYGKIPELEKKLKEAEAQDGKAGMVEEVVTPDHVAHIVSRWTGIPVDKMLQGERDKLLRMEDEIGKRVVGQGEAVQAVSKAVRRARAGLQDPNRPIGSFIFLGPTGVGKTELTKALASFLFDDDSAMVRIDMSEFMEKHSVARLIGAPPGYVGYEEGGALTEAVRRRPYQVVLFDEIEKAHPDVFNVLLQVLDDGRLTDGQGRTVDFRNTLIIMTSNLGAEYLVNLGEDQDVDAVRDEVMGVVRASFRPEFLNRVDEVILFHRLRRKDMDRIVEIQFKRLESLLVDRKITLSLDHEAIEWLAAKGYDPAYGARPLKRVMQKELQDPLAEKILLGEILDGSTVKVTSGSDRLNFRSKPTVVATEAAA</sequence>
<gene>
    <name type="primary">clpB</name>
    <name type="ordered locus">mll3429</name>
</gene>
<feature type="chain" id="PRO_0000191165" description="Chaperone protein ClpB">
    <location>
        <begin position="1"/>
        <end position="868"/>
    </location>
</feature>
<feature type="domain" description="Clp R" evidence="2">
    <location>
        <begin position="3"/>
        <end position="147"/>
    </location>
</feature>
<feature type="region of interest" description="Repeat 1" evidence="2">
    <location>
        <begin position="6"/>
        <end position="71"/>
    </location>
</feature>
<feature type="region of interest" description="Repeat 2" evidence="2">
    <location>
        <begin position="83"/>
        <end position="147"/>
    </location>
</feature>
<feature type="region of interest" description="NBD1" evidence="1">
    <location>
        <begin position="160"/>
        <end position="341"/>
    </location>
</feature>
<feature type="region of interest" description="Linker" evidence="1">
    <location>
        <begin position="342"/>
        <end position="545"/>
    </location>
</feature>
<feature type="region of interest" description="NBD2" evidence="1">
    <location>
        <begin position="555"/>
        <end position="765"/>
    </location>
</feature>
<feature type="region of interest" description="C-terminal" evidence="1">
    <location>
        <begin position="766"/>
        <end position="868"/>
    </location>
</feature>
<feature type="coiled-coil region" evidence="1">
    <location>
        <begin position="392"/>
        <end position="523"/>
    </location>
</feature>
<feature type="binding site" evidence="1">
    <location>
        <begin position="207"/>
        <end position="214"/>
    </location>
    <ligand>
        <name>ATP</name>
        <dbReference type="ChEBI" id="CHEBI:30616"/>
        <label>1</label>
    </ligand>
</feature>
<feature type="binding site" evidence="1">
    <location>
        <begin position="605"/>
        <end position="612"/>
    </location>
    <ligand>
        <name>ATP</name>
        <dbReference type="ChEBI" id="CHEBI:30616"/>
        <label>2</label>
    </ligand>
</feature>
<reference key="1">
    <citation type="journal article" date="2000" name="DNA Res.">
        <title>Complete genome structure of the nitrogen-fixing symbiotic bacterium Mesorhizobium loti.</title>
        <authorList>
            <person name="Kaneko T."/>
            <person name="Nakamura Y."/>
            <person name="Sato S."/>
            <person name="Asamizu E."/>
            <person name="Kato T."/>
            <person name="Sasamoto S."/>
            <person name="Watanabe A."/>
            <person name="Idesawa K."/>
            <person name="Ishikawa A."/>
            <person name="Kawashima K."/>
            <person name="Kimura T."/>
            <person name="Kishida Y."/>
            <person name="Kiyokawa C."/>
            <person name="Kohara M."/>
            <person name="Matsumoto M."/>
            <person name="Matsuno A."/>
            <person name="Mochizuki Y."/>
            <person name="Nakayama S."/>
            <person name="Nakazaki N."/>
            <person name="Shimpo S."/>
            <person name="Sugimoto M."/>
            <person name="Takeuchi C."/>
            <person name="Yamada M."/>
            <person name="Tabata S."/>
        </authorList>
    </citation>
    <scope>NUCLEOTIDE SEQUENCE [LARGE SCALE GENOMIC DNA]</scope>
    <source>
        <strain>LMG 29417 / CECT 9101 / MAFF 303099</strain>
    </source>
</reference>
<accession>Q98G96</accession>
<evidence type="ECO:0000250" key="1"/>
<evidence type="ECO:0000255" key="2">
    <source>
        <dbReference type="PROSITE-ProRule" id="PRU01251"/>
    </source>
</evidence>
<evidence type="ECO:0000305" key="3"/>
<comment type="function">
    <text evidence="1">Part of a stress-induced multi-chaperone system, it is involved in the recovery of the cell from heat-induced damage, in cooperation with DnaK, DnaJ and GrpE. Acts before DnaK, in the processing of protein aggregates. Protein binding stimulates the ATPase activity; ATP hydrolysis unfolds the denatured protein aggregates, which probably helps expose new hydrophobic binding sites on the surface of ClpB-bound aggregates, contributing to the solubilization and refolding of denatured protein aggregates by DnaK (By similarity).</text>
</comment>
<comment type="subunit">
    <text evidence="1">Homohexamer. The oligomerization is ATP-dependent (By similarity).</text>
</comment>
<comment type="subcellular location">
    <subcellularLocation>
        <location evidence="3">Cytoplasm</location>
    </subcellularLocation>
</comment>
<comment type="domain">
    <text evidence="1">The Clp repeat (R) domain probably functions as a substrate-discriminating domain, recruiting aggregated proteins to the ClpB hexamer and/or stabilizing bound proteins. The NBD2 domain is responsible for oligomerization, whereas the NBD1 domain stabilizes the hexamer probably in an ATP-dependent manner. The movement of the coiled-coil domain is essential for ClpB ability to rescue proteins from an aggregated state, probably by pulling apart large aggregated proteins, which are bound between the coiled-coils motifs of adjacent ClpB subunits in the functional hexamer (By similarity).</text>
</comment>
<comment type="similarity">
    <text evidence="3">Belongs to the ClpA/ClpB family.</text>
</comment>